<name>LBH_PONAB</name>
<proteinExistence type="inferred from homology"/>
<organism>
    <name type="scientific">Pongo abelii</name>
    <name type="common">Sumatran orangutan</name>
    <name type="synonym">Pongo pygmaeus abelii</name>
    <dbReference type="NCBI Taxonomy" id="9601"/>
    <lineage>
        <taxon>Eukaryota</taxon>
        <taxon>Metazoa</taxon>
        <taxon>Chordata</taxon>
        <taxon>Craniata</taxon>
        <taxon>Vertebrata</taxon>
        <taxon>Euteleostomi</taxon>
        <taxon>Mammalia</taxon>
        <taxon>Eutheria</taxon>
        <taxon>Euarchontoglires</taxon>
        <taxon>Primates</taxon>
        <taxon>Haplorrhini</taxon>
        <taxon>Catarrhini</taxon>
        <taxon>Hominidae</taxon>
        <taxon>Pongo</taxon>
    </lineage>
</organism>
<reference key="1">
    <citation type="submission" date="2004-11" db="EMBL/GenBank/DDBJ databases">
        <authorList>
            <consortium name="The German cDNA consortium"/>
        </authorList>
    </citation>
    <scope>NUCLEOTIDE SEQUENCE [LARGE SCALE MRNA]</scope>
    <source>
        <tissue>Heart</tissue>
    </source>
</reference>
<accession>Q5RD13</accession>
<evidence type="ECO:0000250" key="1"/>
<evidence type="ECO:0000250" key="2">
    <source>
        <dbReference type="UniProtKB" id="Q53QV2"/>
    </source>
</evidence>
<evidence type="ECO:0000255" key="3"/>
<evidence type="ECO:0000256" key="4">
    <source>
        <dbReference type="SAM" id="MobiDB-lite"/>
    </source>
</evidence>
<evidence type="ECO:0000305" key="5"/>
<comment type="function">
    <text evidence="1">Transcriptional activator.</text>
</comment>
<comment type="subcellular location">
    <subcellularLocation>
        <location evidence="1">Nucleus</location>
    </subcellularLocation>
    <subcellularLocation>
        <location evidence="1">Cytoplasm</location>
    </subcellularLocation>
</comment>
<comment type="similarity">
    <text evidence="5">Belongs to the LBH family.</text>
</comment>
<gene>
    <name type="primary">LBH</name>
</gene>
<sequence>MSIYFPIHCPDYLRSAEMTEVMMNTQPMEEIGLSPRKDGLSYQIFPDPSDFDRCCKLKDRLPSIVVEPTEGEVESGELRWPPEEFLVQEDEQDNCEETAKENKEQ</sequence>
<feature type="chain" id="PRO_0000324804" description="Protein LBH">
    <location>
        <begin position="1"/>
        <end position="105"/>
    </location>
</feature>
<feature type="domain" description="LBH" evidence="3">
    <location>
        <begin position="18"/>
        <end position="104"/>
    </location>
</feature>
<feature type="region of interest" description="Disordered" evidence="4">
    <location>
        <begin position="86"/>
        <end position="105"/>
    </location>
</feature>
<feature type="compositionally biased region" description="Acidic residues" evidence="4">
    <location>
        <begin position="86"/>
        <end position="96"/>
    </location>
</feature>
<feature type="modified residue" description="Phosphoserine" evidence="2">
    <location>
        <position position="63"/>
    </location>
</feature>
<dbReference type="EMBL" id="CR858105">
    <property type="protein sequence ID" value="CAH90344.1"/>
    <property type="molecule type" value="mRNA"/>
</dbReference>
<dbReference type="RefSeq" id="NP_001125165.1">
    <property type="nucleotide sequence ID" value="NM_001131693.1"/>
</dbReference>
<dbReference type="FunCoup" id="Q5RD13">
    <property type="interactions" value="558"/>
</dbReference>
<dbReference type="GeneID" id="100172052"/>
<dbReference type="KEGG" id="pon:100172052"/>
<dbReference type="CTD" id="81606"/>
<dbReference type="eggNOG" id="ENOG502S1QG">
    <property type="taxonomic scope" value="Eukaryota"/>
</dbReference>
<dbReference type="InParanoid" id="Q5RD13"/>
<dbReference type="OrthoDB" id="8937789at2759"/>
<dbReference type="Proteomes" id="UP000001595">
    <property type="component" value="Unplaced"/>
</dbReference>
<dbReference type="GO" id="GO:0005737">
    <property type="term" value="C:cytoplasm"/>
    <property type="evidence" value="ECO:0000250"/>
    <property type="project" value="UniProtKB"/>
</dbReference>
<dbReference type="GO" id="GO:0005634">
    <property type="term" value="C:nucleus"/>
    <property type="evidence" value="ECO:0000250"/>
    <property type="project" value="UniProtKB"/>
</dbReference>
<dbReference type="GO" id="GO:0032991">
    <property type="term" value="C:protein-containing complex"/>
    <property type="evidence" value="ECO:0000250"/>
    <property type="project" value="UniProtKB"/>
</dbReference>
<dbReference type="GO" id="GO:0045892">
    <property type="term" value="P:negative regulation of DNA-templated transcription"/>
    <property type="evidence" value="ECO:0000250"/>
    <property type="project" value="UniProtKB"/>
</dbReference>
<dbReference type="GO" id="GO:0045893">
    <property type="term" value="P:positive regulation of DNA-templated transcription"/>
    <property type="evidence" value="ECO:0000250"/>
    <property type="project" value="UniProtKB"/>
</dbReference>
<dbReference type="GO" id="GO:0043408">
    <property type="term" value="P:regulation of MAPK cascade"/>
    <property type="evidence" value="ECO:0000250"/>
    <property type="project" value="UniProtKB"/>
</dbReference>
<dbReference type="InterPro" id="IPR013294">
    <property type="entry name" value="LBH"/>
</dbReference>
<dbReference type="InterPro" id="IPR038990">
    <property type="entry name" value="LBH_dom"/>
</dbReference>
<dbReference type="InterPro" id="IPR042945">
    <property type="entry name" value="LBH_dom_prot"/>
</dbReference>
<dbReference type="PANTHER" id="PTHR14987:SF2">
    <property type="entry name" value="PROTEIN LBH"/>
    <property type="match status" value="1"/>
</dbReference>
<dbReference type="PANTHER" id="PTHR14987">
    <property type="entry name" value="PROTEIN LBH-RELATED"/>
    <property type="match status" value="1"/>
</dbReference>
<dbReference type="Pfam" id="PF15317">
    <property type="entry name" value="Lbh"/>
    <property type="match status" value="1"/>
</dbReference>
<dbReference type="PIRSF" id="PIRSF008130">
    <property type="entry name" value="LBH"/>
    <property type="match status" value="1"/>
</dbReference>
<dbReference type="PRINTS" id="PR01881">
    <property type="entry name" value="LBHPROTEIN"/>
</dbReference>
<protein>
    <recommendedName>
        <fullName>Protein LBH</fullName>
    </recommendedName>
</protein>
<keyword id="KW-0963">Cytoplasm</keyword>
<keyword id="KW-0217">Developmental protein</keyword>
<keyword id="KW-0539">Nucleus</keyword>
<keyword id="KW-0597">Phosphoprotein</keyword>
<keyword id="KW-1185">Reference proteome</keyword>
<keyword id="KW-0804">Transcription</keyword>
<keyword id="KW-0805">Transcription regulation</keyword>